<keyword id="KW-1185">Reference proteome</keyword>
<feature type="chain" id="PRO_0000369813" description="Uncharacterized protein V5">
    <location>
        <begin position="1"/>
        <end position="119"/>
    </location>
</feature>
<feature type="region of interest" description="Disordered" evidence="1">
    <location>
        <begin position="86"/>
        <end position="119"/>
    </location>
</feature>
<feature type="compositionally biased region" description="Acidic residues" evidence="1">
    <location>
        <begin position="95"/>
        <end position="106"/>
    </location>
</feature>
<feature type="compositionally biased region" description="Basic residues" evidence="1">
    <location>
        <begin position="110"/>
        <end position="119"/>
    </location>
</feature>
<reference key="1">
    <citation type="journal article" date="2008" name="Nature">
        <title>The virophage as a unique parasite of the giant mimivirus.</title>
        <authorList>
            <person name="La Scola B."/>
            <person name="Desnues C."/>
            <person name="Pagnier I."/>
            <person name="Robert C."/>
            <person name="Barrassi L."/>
            <person name="Fournous G."/>
            <person name="Merchat M."/>
            <person name="Suzan-Monti M."/>
            <person name="Forterre P."/>
            <person name="Koonin E."/>
            <person name="Raoult D."/>
        </authorList>
    </citation>
    <scope>NUCLEOTIDE SEQUENCE [GENOMIC DNA]</scope>
</reference>
<sequence>MSNITYEFNENDVIVNNNGMPCIQRPFDKEALYSLLDKMSKEQLDELIEDINDEKRLREFKEEKLKKVRSRMNRELKIYKQELENKKQRMKMLTEQEEEEEEEEEEPPKPKKKVINRKK</sequence>
<name>V5_SPTNK</name>
<protein>
    <recommendedName>
        <fullName>Uncharacterized protein V5</fullName>
    </recommendedName>
</protein>
<evidence type="ECO:0000256" key="1">
    <source>
        <dbReference type="SAM" id="MobiDB-lite"/>
    </source>
</evidence>
<gene>
    <name type="ORF">ORF5</name>
</gene>
<dbReference type="EMBL" id="EU606015">
    <property type="protein sequence ID" value="ACF16989.1"/>
    <property type="molecule type" value="Genomic_DNA"/>
</dbReference>
<dbReference type="RefSeq" id="YP_002122366.1">
    <property type="nucleotide sequence ID" value="NC_011132.1"/>
</dbReference>
<dbReference type="SMR" id="B4YNE5"/>
<dbReference type="KEGG" id="vg:6760346"/>
<dbReference type="OrthoDB" id="38550at10239"/>
<dbReference type="Proteomes" id="UP000001863">
    <property type="component" value="Segment"/>
</dbReference>
<organism>
    <name type="scientific">Sputnik virophage</name>
    <dbReference type="NCBI Taxonomy" id="543939"/>
    <lineage>
        <taxon>Viruses</taxon>
        <taxon>Varidnaviria</taxon>
        <taxon>Bamfordvirae</taxon>
        <taxon>Preplasmiviricota</taxon>
        <taxon>Maveriviricetes</taxon>
        <taxon>Priklausovirales</taxon>
        <taxon>Lavidaviridae</taxon>
        <taxon>Sputnikvirus</taxon>
        <taxon>Mimivirus-dependent virus Sputnik</taxon>
    </lineage>
</organism>
<accession>B4YNE5</accession>
<proteinExistence type="predicted"/>
<organismHost>
    <name type="scientific">Acanthamoeba polyphaga</name>
    <name type="common">Amoeba</name>
    <dbReference type="NCBI Taxonomy" id="5757"/>
</organismHost>